<organism>
    <name type="scientific">Shewanella frigidimarina (strain NCIMB 400)</name>
    <dbReference type="NCBI Taxonomy" id="318167"/>
    <lineage>
        <taxon>Bacteria</taxon>
        <taxon>Pseudomonadati</taxon>
        <taxon>Pseudomonadota</taxon>
        <taxon>Gammaproteobacteria</taxon>
        <taxon>Alteromonadales</taxon>
        <taxon>Shewanellaceae</taxon>
        <taxon>Shewanella</taxon>
    </lineage>
</organism>
<keyword id="KW-0031">Aminopeptidase</keyword>
<keyword id="KW-0963">Cytoplasm</keyword>
<keyword id="KW-0378">Hydrolase</keyword>
<keyword id="KW-0464">Manganese</keyword>
<keyword id="KW-0479">Metal-binding</keyword>
<keyword id="KW-0645">Protease</keyword>
<keyword id="KW-1185">Reference proteome</keyword>
<protein>
    <recommendedName>
        <fullName evidence="1">Probable cytosol aminopeptidase</fullName>
        <ecNumber evidence="1">3.4.11.1</ecNumber>
    </recommendedName>
    <alternativeName>
        <fullName evidence="1">Leucine aminopeptidase</fullName>
        <shortName evidence="1">LAP</shortName>
        <ecNumber evidence="1">3.4.11.10</ecNumber>
    </alternativeName>
    <alternativeName>
        <fullName evidence="1">Leucyl aminopeptidase</fullName>
    </alternativeName>
</protein>
<reference key="1">
    <citation type="submission" date="2006-08" db="EMBL/GenBank/DDBJ databases">
        <title>Complete sequence of Shewanella frigidimarina NCIMB 400.</title>
        <authorList>
            <consortium name="US DOE Joint Genome Institute"/>
            <person name="Copeland A."/>
            <person name="Lucas S."/>
            <person name="Lapidus A."/>
            <person name="Barry K."/>
            <person name="Detter J.C."/>
            <person name="Glavina del Rio T."/>
            <person name="Hammon N."/>
            <person name="Israni S."/>
            <person name="Dalin E."/>
            <person name="Tice H."/>
            <person name="Pitluck S."/>
            <person name="Fredrickson J.K."/>
            <person name="Kolker E."/>
            <person name="McCuel L.A."/>
            <person name="DiChristina T."/>
            <person name="Nealson K.H."/>
            <person name="Newman D."/>
            <person name="Tiedje J.M."/>
            <person name="Zhou J."/>
            <person name="Romine M.F."/>
            <person name="Culley D.E."/>
            <person name="Serres M."/>
            <person name="Chertkov O."/>
            <person name="Brettin T."/>
            <person name="Bruce D."/>
            <person name="Han C."/>
            <person name="Tapia R."/>
            <person name="Gilna P."/>
            <person name="Schmutz J."/>
            <person name="Larimer F."/>
            <person name="Land M."/>
            <person name="Hauser L."/>
            <person name="Kyrpides N."/>
            <person name="Mikhailova N."/>
            <person name="Richardson P."/>
        </authorList>
    </citation>
    <scope>NUCLEOTIDE SEQUENCE [LARGE SCALE GENOMIC DNA]</scope>
    <source>
        <strain>NCIMB 400</strain>
    </source>
</reference>
<comment type="function">
    <text evidence="1">Presumably involved in the processing and regular turnover of intracellular proteins. Catalyzes the removal of unsubstituted N-terminal amino acids from various peptides.</text>
</comment>
<comment type="catalytic activity">
    <reaction evidence="1">
        <text>Release of an N-terminal amino acid, Xaa-|-Yaa-, in which Xaa is preferably Leu, but may be other amino acids including Pro although not Arg or Lys, and Yaa may be Pro. Amino acid amides and methyl esters are also readily hydrolyzed, but rates on arylamides are exceedingly low.</text>
        <dbReference type="EC" id="3.4.11.1"/>
    </reaction>
</comment>
<comment type="catalytic activity">
    <reaction evidence="1">
        <text>Release of an N-terminal amino acid, preferentially leucine, but not glutamic or aspartic acids.</text>
        <dbReference type="EC" id="3.4.11.10"/>
    </reaction>
</comment>
<comment type="cofactor">
    <cofactor evidence="1">
        <name>Mn(2+)</name>
        <dbReference type="ChEBI" id="CHEBI:29035"/>
    </cofactor>
    <text evidence="1">Binds 2 manganese ions per subunit.</text>
</comment>
<comment type="subcellular location">
    <subcellularLocation>
        <location evidence="1">Cytoplasm</location>
    </subcellularLocation>
</comment>
<comment type="similarity">
    <text evidence="1">Belongs to the peptidase M17 family.</text>
</comment>
<name>AMPA_SHEFN</name>
<proteinExistence type="inferred from homology"/>
<evidence type="ECO:0000255" key="1">
    <source>
        <dbReference type="HAMAP-Rule" id="MF_00181"/>
    </source>
</evidence>
<accession>Q086N8</accession>
<sequence length="502" mass="54810">MEFSVKSGSPEKQRSACIVVGVYEPRRLSGIAEQLDKISEGYISNLLRRGDLEGKPGQMLLLHHVPNVLSERVLLVGCGKERELDERQYKQIITKTISTLNETGSMEAVCFLTELHVKGRDTYWKVRQAIESTQNSLYSFDALKTRKGETRRPLRKMVFNVPTRRELTIGERAIEHGTAVSAGMHLCRDVANMPPNICNPAYLASQARQMAEVYENLNVTTIGEEQMAKLGMNSYLAVGRASANESIMTVMEYQGAVDSTEKPIVLVGKGLTFDSGGISLKPGEAMDEMKYDMGGAAGVIGTMKALCEMKLPINVIGILAGCENMPAGNAYRPGDILTTMSGQTVEVLNTDAEGRLVLCDVLTYVERFDPELVIDTATLTGACVIALGKHASGLFSSHNPLAHEMLNAGEQSGDRAWRMPLWDEYQDMLDSPFADMTNLGGRPAGSITAACFLSRFTKKYNWAHLDVAGTAWNSGANKGSTGRPVPILSQFLINRAGVEISE</sequence>
<feature type="chain" id="PRO_1000019978" description="Probable cytosol aminopeptidase">
    <location>
        <begin position="1"/>
        <end position="502"/>
    </location>
</feature>
<feature type="active site" evidence="1">
    <location>
        <position position="281"/>
    </location>
</feature>
<feature type="active site" evidence="1">
    <location>
        <position position="355"/>
    </location>
</feature>
<feature type="binding site" evidence="1">
    <location>
        <position position="269"/>
    </location>
    <ligand>
        <name>Mn(2+)</name>
        <dbReference type="ChEBI" id="CHEBI:29035"/>
        <label>2</label>
    </ligand>
</feature>
<feature type="binding site" evidence="1">
    <location>
        <position position="274"/>
    </location>
    <ligand>
        <name>Mn(2+)</name>
        <dbReference type="ChEBI" id="CHEBI:29035"/>
        <label>1</label>
    </ligand>
</feature>
<feature type="binding site" evidence="1">
    <location>
        <position position="274"/>
    </location>
    <ligand>
        <name>Mn(2+)</name>
        <dbReference type="ChEBI" id="CHEBI:29035"/>
        <label>2</label>
    </ligand>
</feature>
<feature type="binding site" evidence="1">
    <location>
        <position position="292"/>
    </location>
    <ligand>
        <name>Mn(2+)</name>
        <dbReference type="ChEBI" id="CHEBI:29035"/>
        <label>2</label>
    </ligand>
</feature>
<feature type="binding site" evidence="1">
    <location>
        <position position="351"/>
    </location>
    <ligand>
        <name>Mn(2+)</name>
        <dbReference type="ChEBI" id="CHEBI:29035"/>
        <label>1</label>
    </ligand>
</feature>
<feature type="binding site" evidence="1">
    <location>
        <position position="353"/>
    </location>
    <ligand>
        <name>Mn(2+)</name>
        <dbReference type="ChEBI" id="CHEBI:29035"/>
        <label>1</label>
    </ligand>
</feature>
<feature type="binding site" evidence="1">
    <location>
        <position position="353"/>
    </location>
    <ligand>
        <name>Mn(2+)</name>
        <dbReference type="ChEBI" id="CHEBI:29035"/>
        <label>2</label>
    </ligand>
</feature>
<gene>
    <name evidence="1" type="primary">pepA</name>
    <name type="ordered locus">Sfri_0924</name>
</gene>
<dbReference type="EC" id="3.4.11.1" evidence="1"/>
<dbReference type="EC" id="3.4.11.10" evidence="1"/>
<dbReference type="EMBL" id="CP000447">
    <property type="protein sequence ID" value="ABI70777.1"/>
    <property type="molecule type" value="Genomic_DNA"/>
</dbReference>
<dbReference type="RefSeq" id="WP_011636398.1">
    <property type="nucleotide sequence ID" value="NC_008345.1"/>
</dbReference>
<dbReference type="SMR" id="Q086N8"/>
<dbReference type="STRING" id="318167.Sfri_0924"/>
<dbReference type="MEROPS" id="M17.003"/>
<dbReference type="KEGG" id="sfr:Sfri_0924"/>
<dbReference type="eggNOG" id="COG0260">
    <property type="taxonomic scope" value="Bacteria"/>
</dbReference>
<dbReference type="HOGENOM" id="CLU_013734_2_2_6"/>
<dbReference type="OrthoDB" id="9809354at2"/>
<dbReference type="Proteomes" id="UP000000684">
    <property type="component" value="Chromosome"/>
</dbReference>
<dbReference type="GO" id="GO:0005737">
    <property type="term" value="C:cytoplasm"/>
    <property type="evidence" value="ECO:0007669"/>
    <property type="project" value="UniProtKB-SubCell"/>
</dbReference>
<dbReference type="GO" id="GO:0030145">
    <property type="term" value="F:manganese ion binding"/>
    <property type="evidence" value="ECO:0007669"/>
    <property type="project" value="UniProtKB-UniRule"/>
</dbReference>
<dbReference type="GO" id="GO:0070006">
    <property type="term" value="F:metalloaminopeptidase activity"/>
    <property type="evidence" value="ECO:0007669"/>
    <property type="project" value="InterPro"/>
</dbReference>
<dbReference type="GO" id="GO:0006508">
    <property type="term" value="P:proteolysis"/>
    <property type="evidence" value="ECO:0007669"/>
    <property type="project" value="UniProtKB-KW"/>
</dbReference>
<dbReference type="CDD" id="cd00433">
    <property type="entry name" value="Peptidase_M17"/>
    <property type="match status" value="1"/>
</dbReference>
<dbReference type="FunFam" id="3.40.220.10:FF:000001">
    <property type="entry name" value="Probable cytosol aminopeptidase"/>
    <property type="match status" value="1"/>
</dbReference>
<dbReference type="FunFam" id="3.40.630.10:FF:000004">
    <property type="entry name" value="Probable cytosol aminopeptidase"/>
    <property type="match status" value="1"/>
</dbReference>
<dbReference type="Gene3D" id="3.40.220.10">
    <property type="entry name" value="Leucine Aminopeptidase, subunit E, domain 1"/>
    <property type="match status" value="1"/>
</dbReference>
<dbReference type="Gene3D" id="3.40.630.10">
    <property type="entry name" value="Zn peptidases"/>
    <property type="match status" value="1"/>
</dbReference>
<dbReference type="HAMAP" id="MF_00181">
    <property type="entry name" value="Cytosol_peptidase_M17"/>
    <property type="match status" value="1"/>
</dbReference>
<dbReference type="InterPro" id="IPR011356">
    <property type="entry name" value="Leucine_aapep/pepB"/>
</dbReference>
<dbReference type="InterPro" id="IPR043472">
    <property type="entry name" value="Macro_dom-like"/>
</dbReference>
<dbReference type="InterPro" id="IPR000819">
    <property type="entry name" value="Peptidase_M17_C"/>
</dbReference>
<dbReference type="InterPro" id="IPR023042">
    <property type="entry name" value="Peptidase_M17_leu_NH2_pept"/>
</dbReference>
<dbReference type="InterPro" id="IPR008283">
    <property type="entry name" value="Peptidase_M17_N"/>
</dbReference>
<dbReference type="NCBIfam" id="NF002072">
    <property type="entry name" value="PRK00913.1-1"/>
    <property type="match status" value="1"/>
</dbReference>
<dbReference type="NCBIfam" id="NF002074">
    <property type="entry name" value="PRK00913.1-4"/>
    <property type="match status" value="1"/>
</dbReference>
<dbReference type="NCBIfam" id="NF002077">
    <property type="entry name" value="PRK00913.2-4"/>
    <property type="match status" value="1"/>
</dbReference>
<dbReference type="PANTHER" id="PTHR11963:SF23">
    <property type="entry name" value="CYTOSOL AMINOPEPTIDASE"/>
    <property type="match status" value="1"/>
</dbReference>
<dbReference type="PANTHER" id="PTHR11963">
    <property type="entry name" value="LEUCINE AMINOPEPTIDASE-RELATED"/>
    <property type="match status" value="1"/>
</dbReference>
<dbReference type="Pfam" id="PF00883">
    <property type="entry name" value="Peptidase_M17"/>
    <property type="match status" value="1"/>
</dbReference>
<dbReference type="Pfam" id="PF02789">
    <property type="entry name" value="Peptidase_M17_N"/>
    <property type="match status" value="1"/>
</dbReference>
<dbReference type="PRINTS" id="PR00481">
    <property type="entry name" value="LAMNOPPTDASE"/>
</dbReference>
<dbReference type="SUPFAM" id="SSF52949">
    <property type="entry name" value="Macro domain-like"/>
    <property type="match status" value="1"/>
</dbReference>
<dbReference type="SUPFAM" id="SSF53187">
    <property type="entry name" value="Zn-dependent exopeptidases"/>
    <property type="match status" value="1"/>
</dbReference>
<dbReference type="PROSITE" id="PS00631">
    <property type="entry name" value="CYTOSOL_AP"/>
    <property type="match status" value="1"/>
</dbReference>